<accession>Q7NL20</accession>
<gene>
    <name evidence="1" type="primary">glgB</name>
    <name type="ordered locus">glr1306</name>
</gene>
<keyword id="KW-0119">Carbohydrate metabolism</keyword>
<keyword id="KW-0320">Glycogen biosynthesis</keyword>
<keyword id="KW-0321">Glycogen metabolism</keyword>
<keyword id="KW-0328">Glycosyltransferase</keyword>
<keyword id="KW-1185">Reference proteome</keyword>
<keyword id="KW-0808">Transferase</keyword>
<organism>
    <name type="scientific">Gloeobacter violaceus (strain ATCC 29082 / PCC 7421)</name>
    <dbReference type="NCBI Taxonomy" id="251221"/>
    <lineage>
        <taxon>Bacteria</taxon>
        <taxon>Bacillati</taxon>
        <taxon>Cyanobacteriota</taxon>
        <taxon>Cyanophyceae</taxon>
        <taxon>Gloeobacterales</taxon>
        <taxon>Gloeobacteraceae</taxon>
        <taxon>Gloeobacter</taxon>
    </lineage>
</organism>
<proteinExistence type="inferred from homology"/>
<protein>
    <recommendedName>
        <fullName evidence="1">1,4-alpha-glucan branching enzyme GlgB</fullName>
        <ecNumber evidence="1">2.4.1.18</ecNumber>
    </recommendedName>
    <alternativeName>
        <fullName evidence="1">1,4-alpha-D-glucan:1,4-alpha-D-glucan 6-glucosyl-transferase</fullName>
    </alternativeName>
    <alternativeName>
        <fullName evidence="1">Alpha-(1-&gt;4)-glucan branching enzyme</fullName>
    </alternativeName>
    <alternativeName>
        <fullName evidence="1">Glycogen branching enzyme</fullName>
        <shortName evidence="1">BE</shortName>
    </alternativeName>
</protein>
<feature type="chain" id="PRO_0000188709" description="1,4-alpha-glucan branching enzyme GlgB">
    <location>
        <begin position="1"/>
        <end position="733"/>
    </location>
</feature>
<feature type="active site" description="Nucleophile" evidence="1">
    <location>
        <position position="409"/>
    </location>
</feature>
<feature type="active site" description="Proton donor" evidence="1">
    <location>
        <position position="462"/>
    </location>
</feature>
<name>GLGB_GLOVI</name>
<evidence type="ECO:0000255" key="1">
    <source>
        <dbReference type="HAMAP-Rule" id="MF_00685"/>
    </source>
</evidence>
<sequence length="733" mass="84411">MNPTVELRDIEALVTNLHADPFAILGPHRAEDGGAWVVRTYQPGASRVVLLGESGELAMENRRHPDLFECAVPTAPGAYRLRVEDAWGERLIEDAYRFRGSLLSDLDGHLFAEGNHHRIYEKLGAHPAVFEGVAGVYFAVWAPSARNVSVLGDFNRWDGRFHQMRRVERSTGIWELFIPELGEGTVYKFEIKNGFGHIYEKSDPYAFQQELRPKSGSVVADLDRYSWNDGEWLKRRALSNPLKQPLAIYEVHLGSWMRVPEEGDRFLSYTELADKLIPYVKDLGFTHIELLPILEHPFDGSWGYQVLGYYAPTSRFGNPTEFMAFVDRCHQSGIGVILDWVPAHFPKDGHGLALFDGTHLYEHADSRQGEHKEWGTLVFNYGRNEVRNFLIANALFWFERYHIDGIRVDAVAAMLYLDYSRHDGEWVANRYGGRENLEAIGFLRQLNELIFLYYPGALSIAEESTAWPLVTRPPYLGGLGFNLKWHMGWMHDTLAYFRTDPLFRRYRHNDITFSITYTFYENFVLALSHDEVVHMKGSIIGKMPGDGWQKFANLRALFTFMYGHPGKKTLFMGMEFAHGREWNAYQSLDWHLLDYPQHRQMQQFVRALNRLYTGQPALYEEDCNPAGFFWVDCHDVLNSVFTFVRRGKDPSEQLLFVCNFTPTYHPHYRVGVLETGFWQEIFNSDSGIYGGSNKGNLGGLWSENWAIHGQPYSLGLQLPPLGCLVFKRRKEQD</sequence>
<dbReference type="EC" id="2.4.1.18" evidence="1"/>
<dbReference type="EMBL" id="BA000045">
    <property type="protein sequence ID" value="BAC89247.1"/>
    <property type="molecule type" value="Genomic_DNA"/>
</dbReference>
<dbReference type="RefSeq" id="NP_924252.1">
    <property type="nucleotide sequence ID" value="NC_005125.1"/>
</dbReference>
<dbReference type="RefSeq" id="WP_011141306.1">
    <property type="nucleotide sequence ID" value="NC_005125.1"/>
</dbReference>
<dbReference type="SMR" id="Q7NL20"/>
<dbReference type="FunCoup" id="Q7NL20">
    <property type="interactions" value="305"/>
</dbReference>
<dbReference type="STRING" id="251221.gene:10758787"/>
<dbReference type="CAZy" id="CBM48">
    <property type="family name" value="Carbohydrate-Binding Module Family 48"/>
</dbReference>
<dbReference type="CAZy" id="GH13">
    <property type="family name" value="Glycoside Hydrolase Family 13"/>
</dbReference>
<dbReference type="EnsemblBacteria" id="BAC89247">
    <property type="protein sequence ID" value="BAC89247"/>
    <property type="gene ID" value="BAC89247"/>
</dbReference>
<dbReference type="KEGG" id="gvi:glr1306"/>
<dbReference type="PATRIC" id="fig|251221.4.peg.1331"/>
<dbReference type="eggNOG" id="COG0296">
    <property type="taxonomic scope" value="Bacteria"/>
</dbReference>
<dbReference type="HOGENOM" id="CLU_004245_3_2_3"/>
<dbReference type="InParanoid" id="Q7NL20"/>
<dbReference type="OrthoDB" id="9800174at2"/>
<dbReference type="PhylomeDB" id="Q7NL20"/>
<dbReference type="UniPathway" id="UPA00164"/>
<dbReference type="Proteomes" id="UP000000557">
    <property type="component" value="Chromosome"/>
</dbReference>
<dbReference type="GO" id="GO:0005737">
    <property type="term" value="C:cytoplasm"/>
    <property type="evidence" value="ECO:0000318"/>
    <property type="project" value="GO_Central"/>
</dbReference>
<dbReference type="GO" id="GO:0005829">
    <property type="term" value="C:cytosol"/>
    <property type="evidence" value="ECO:0000318"/>
    <property type="project" value="GO_Central"/>
</dbReference>
<dbReference type="GO" id="GO:0003844">
    <property type="term" value="F:1,4-alpha-glucan branching enzyme activity"/>
    <property type="evidence" value="ECO:0000318"/>
    <property type="project" value="GO_Central"/>
</dbReference>
<dbReference type="GO" id="GO:0043169">
    <property type="term" value="F:cation binding"/>
    <property type="evidence" value="ECO:0007669"/>
    <property type="project" value="InterPro"/>
</dbReference>
<dbReference type="GO" id="GO:0004553">
    <property type="term" value="F:hydrolase activity, hydrolyzing O-glycosyl compounds"/>
    <property type="evidence" value="ECO:0007669"/>
    <property type="project" value="InterPro"/>
</dbReference>
<dbReference type="GO" id="GO:0005978">
    <property type="term" value="P:glycogen biosynthetic process"/>
    <property type="evidence" value="ECO:0000318"/>
    <property type="project" value="GO_Central"/>
</dbReference>
<dbReference type="CDD" id="cd11322">
    <property type="entry name" value="AmyAc_Glg_BE"/>
    <property type="match status" value="1"/>
</dbReference>
<dbReference type="CDD" id="cd02855">
    <property type="entry name" value="E_set_GBE_prok_N"/>
    <property type="match status" value="1"/>
</dbReference>
<dbReference type="FunFam" id="2.60.40.10:FF:000169">
    <property type="entry name" value="1,4-alpha-glucan branching enzyme GlgB"/>
    <property type="match status" value="1"/>
</dbReference>
<dbReference type="FunFam" id="2.60.40.1180:FF:000002">
    <property type="entry name" value="1,4-alpha-glucan branching enzyme GlgB"/>
    <property type="match status" value="1"/>
</dbReference>
<dbReference type="FunFam" id="3.20.20.80:FF:000003">
    <property type="entry name" value="1,4-alpha-glucan branching enzyme GlgB"/>
    <property type="match status" value="1"/>
</dbReference>
<dbReference type="Gene3D" id="3.20.20.80">
    <property type="entry name" value="Glycosidases"/>
    <property type="match status" value="1"/>
</dbReference>
<dbReference type="Gene3D" id="2.60.40.1180">
    <property type="entry name" value="Golgi alpha-mannosidase II"/>
    <property type="match status" value="1"/>
</dbReference>
<dbReference type="Gene3D" id="2.60.40.10">
    <property type="entry name" value="Immunoglobulins"/>
    <property type="match status" value="2"/>
</dbReference>
<dbReference type="HAMAP" id="MF_00685">
    <property type="entry name" value="GlgB"/>
    <property type="match status" value="1"/>
</dbReference>
<dbReference type="InterPro" id="IPR006048">
    <property type="entry name" value="A-amylase/branching_C"/>
</dbReference>
<dbReference type="InterPro" id="IPR037439">
    <property type="entry name" value="Branching_enzy"/>
</dbReference>
<dbReference type="InterPro" id="IPR006407">
    <property type="entry name" value="GlgB"/>
</dbReference>
<dbReference type="InterPro" id="IPR054169">
    <property type="entry name" value="GlgB_N"/>
</dbReference>
<dbReference type="InterPro" id="IPR044143">
    <property type="entry name" value="GlgB_N_E_set_prok"/>
</dbReference>
<dbReference type="InterPro" id="IPR006047">
    <property type="entry name" value="Glyco_hydro_13_cat_dom"/>
</dbReference>
<dbReference type="InterPro" id="IPR004193">
    <property type="entry name" value="Glyco_hydro_13_N"/>
</dbReference>
<dbReference type="InterPro" id="IPR013780">
    <property type="entry name" value="Glyco_hydro_b"/>
</dbReference>
<dbReference type="InterPro" id="IPR017853">
    <property type="entry name" value="Glycoside_hydrolase_SF"/>
</dbReference>
<dbReference type="InterPro" id="IPR013783">
    <property type="entry name" value="Ig-like_fold"/>
</dbReference>
<dbReference type="InterPro" id="IPR014756">
    <property type="entry name" value="Ig_E-set"/>
</dbReference>
<dbReference type="NCBIfam" id="TIGR01515">
    <property type="entry name" value="branching_enzym"/>
    <property type="match status" value="1"/>
</dbReference>
<dbReference type="NCBIfam" id="NF003811">
    <property type="entry name" value="PRK05402.1"/>
    <property type="match status" value="1"/>
</dbReference>
<dbReference type="NCBIfam" id="NF008967">
    <property type="entry name" value="PRK12313.1"/>
    <property type="match status" value="1"/>
</dbReference>
<dbReference type="PANTHER" id="PTHR43651">
    <property type="entry name" value="1,4-ALPHA-GLUCAN-BRANCHING ENZYME"/>
    <property type="match status" value="1"/>
</dbReference>
<dbReference type="PANTHER" id="PTHR43651:SF3">
    <property type="entry name" value="1,4-ALPHA-GLUCAN-BRANCHING ENZYME"/>
    <property type="match status" value="1"/>
</dbReference>
<dbReference type="Pfam" id="PF00128">
    <property type="entry name" value="Alpha-amylase"/>
    <property type="match status" value="1"/>
</dbReference>
<dbReference type="Pfam" id="PF02806">
    <property type="entry name" value="Alpha-amylase_C"/>
    <property type="match status" value="1"/>
</dbReference>
<dbReference type="Pfam" id="PF02922">
    <property type="entry name" value="CBM_48"/>
    <property type="match status" value="1"/>
</dbReference>
<dbReference type="Pfam" id="PF22019">
    <property type="entry name" value="GlgB_N"/>
    <property type="match status" value="1"/>
</dbReference>
<dbReference type="PIRSF" id="PIRSF000463">
    <property type="entry name" value="GlgB"/>
    <property type="match status" value="1"/>
</dbReference>
<dbReference type="SMART" id="SM00642">
    <property type="entry name" value="Aamy"/>
    <property type="match status" value="1"/>
</dbReference>
<dbReference type="SUPFAM" id="SSF51445">
    <property type="entry name" value="(Trans)glycosidases"/>
    <property type="match status" value="1"/>
</dbReference>
<dbReference type="SUPFAM" id="SSF81296">
    <property type="entry name" value="E set domains"/>
    <property type="match status" value="2"/>
</dbReference>
<dbReference type="SUPFAM" id="SSF51011">
    <property type="entry name" value="Glycosyl hydrolase domain"/>
    <property type="match status" value="1"/>
</dbReference>
<reference key="1">
    <citation type="journal article" date="2003" name="DNA Res.">
        <title>Complete genome structure of Gloeobacter violaceus PCC 7421, a cyanobacterium that lacks thylakoids.</title>
        <authorList>
            <person name="Nakamura Y."/>
            <person name="Kaneko T."/>
            <person name="Sato S."/>
            <person name="Mimuro M."/>
            <person name="Miyashita H."/>
            <person name="Tsuchiya T."/>
            <person name="Sasamoto S."/>
            <person name="Watanabe A."/>
            <person name="Kawashima K."/>
            <person name="Kishida Y."/>
            <person name="Kiyokawa C."/>
            <person name="Kohara M."/>
            <person name="Matsumoto M."/>
            <person name="Matsuno A."/>
            <person name="Nakazaki N."/>
            <person name="Shimpo S."/>
            <person name="Takeuchi C."/>
            <person name="Yamada M."/>
            <person name="Tabata S."/>
        </authorList>
    </citation>
    <scope>NUCLEOTIDE SEQUENCE [LARGE SCALE GENOMIC DNA]</scope>
    <source>
        <strain>ATCC 29082 / PCC 7421</strain>
    </source>
</reference>
<comment type="function">
    <text evidence="1">Catalyzes the formation of the alpha-1,6-glucosidic linkages in glycogen by scission of a 1,4-alpha-linked oligosaccharide from growing alpha-1,4-glucan chains and the subsequent attachment of the oligosaccharide to the alpha-1,6 position.</text>
</comment>
<comment type="catalytic activity">
    <reaction evidence="1">
        <text>Transfers a segment of a (1-&gt;4)-alpha-D-glucan chain to a primary hydroxy group in a similar glucan chain.</text>
        <dbReference type="EC" id="2.4.1.18"/>
    </reaction>
</comment>
<comment type="pathway">
    <text evidence="1">Glycan biosynthesis; glycogen biosynthesis.</text>
</comment>
<comment type="subunit">
    <text evidence="1">Monomer.</text>
</comment>
<comment type="similarity">
    <text evidence="1">Belongs to the glycosyl hydrolase 13 family. GlgB subfamily.</text>
</comment>